<name>CTR9_HUMAN</name>
<organism>
    <name type="scientific">Homo sapiens</name>
    <name type="common">Human</name>
    <dbReference type="NCBI Taxonomy" id="9606"/>
    <lineage>
        <taxon>Eukaryota</taxon>
        <taxon>Metazoa</taxon>
        <taxon>Chordata</taxon>
        <taxon>Craniata</taxon>
        <taxon>Vertebrata</taxon>
        <taxon>Euteleostomi</taxon>
        <taxon>Mammalia</taxon>
        <taxon>Eutheria</taxon>
        <taxon>Euarchontoglires</taxon>
        <taxon>Primates</taxon>
        <taxon>Haplorrhini</taxon>
        <taxon>Catarrhini</taxon>
        <taxon>Hominidae</taxon>
        <taxon>Homo</taxon>
    </lineage>
</organism>
<sequence>MSRGSIEIPLRDTDEVIELDFDQLPEGDEVISILKQEHTQLHIWIALALEYYKQGKTEEFVKLLEAARIDGNLDYRDHEKDQMTCLDTLAAYYVQQARKEKNKDNKKDLITQATLLYTMADKIIMYDQNHLLGRACFCLLEGDKMDQADAQFHFVLNQSPNNIPALLGKACISFNKKDYRGALAYYKKALRTNPGCPAEVRLGMGHCFVKLNKLEKARLAFSRALELNSKCVGALVGLAVLELNNKEADSIKNGVQLLSRAYTIDPSNPMVLNHLANHFFFKKDYSKVQHLALHAFHNTEVEAMQAESCYQLARSFHVQEDYDQAFQYYYQATQFASSSFVLPFFGLGQMYIYRGDKENASQCFEKVLKAYPNNYETMKILGSLYAASEDQEKRDIAKGHLKKVTEQYPDDVEAWIELAQILEQTDIQGALSAYGTATRILQEKVQADVPPEILNNVGALHFRLGNLGEAKKYFLASLDRAKAEAEHDEHYYNAISVTTSYNLARLYEAMCEFHEAEKLYKNILREHPNYVDCYLRLGAMARDKGNFYEASDWFKEALQINQDHPDAWSLIGNLHLAKQEWGPGQKKFERILKQPSTQSDTYSMLALGNVWLQTLHQPTRDREKEKRHQDRALAIYKQVLRNDAKNLYAANGIGAVLAHKGYFREARDVFAQVREATADISDVWLNLAHIYVEQKQYISAVQMYENCLRKFYKHQNTEVVLYLARALFKCGKLQECKQTLLKARHVAPSDTVLMFNVALVLQRLATSVLKDEKSNLKEVLNAVKELELAHRYFSYLSKVGDKMRFDLALAATEARQCSDLLSQAQYHVARARKQDEEERELRAKQEQEKELLRQKLLKEQEEKRLREKEEQKKLLEQRAQYVEKTKNILMFTGETEATKEKKRGGGGGRRSKKGGEFDEFVNDDTDDDLPISKKKKRRKGSGSEQEGEDEEGGERKKKKRRRHPKGEEGSDDDETENGPKPKKRRPPKAEKKKAPKPERLPPSMKGKIKSKAIISSSDDSSDEDKLKIADEGHPRNSNSNSDSDEDEQRKKCASSESDSDENQNKSGSEAGSPRRPRRQRSDQDSDSDQPSRKRRPSGSEQSDNESVQSGRSHSGVSENDSRPASPSAESDHESERGSDNEGSGQGSGNESEPEGSNNEASDRGSEHGSDDSD</sequence>
<accession>Q6PD62</accession>
<accession>D3DQV8</accession>
<accession>Q15015</accession>
<dbReference type="EMBL" id="D63875">
    <property type="protein sequence ID" value="BAA09925.2"/>
    <property type="status" value="ALT_INIT"/>
    <property type="molecule type" value="mRNA"/>
</dbReference>
<dbReference type="EMBL" id="CH471064">
    <property type="protein sequence ID" value="EAW68557.1"/>
    <property type="molecule type" value="Genomic_DNA"/>
</dbReference>
<dbReference type="EMBL" id="CH471064">
    <property type="protein sequence ID" value="EAW68558.1"/>
    <property type="molecule type" value="Genomic_DNA"/>
</dbReference>
<dbReference type="EMBL" id="BC058914">
    <property type="protein sequence ID" value="AAH58914.1"/>
    <property type="molecule type" value="mRNA"/>
</dbReference>
<dbReference type="CCDS" id="CCDS7805.1"/>
<dbReference type="RefSeq" id="NP_055448.1">
    <property type="nucleotide sequence ID" value="NM_014633.5"/>
</dbReference>
<dbReference type="PDB" id="5ZYQ">
    <property type="method" value="X-ray"/>
    <property type="resolution" value="2.53 A"/>
    <property type="chains" value="A=1-249"/>
</dbReference>
<dbReference type="PDB" id="6GMH">
    <property type="method" value="EM"/>
    <property type="resolution" value="3.10 A"/>
    <property type="chains" value="Q=301-1173"/>
</dbReference>
<dbReference type="PDB" id="6TED">
    <property type="method" value="EM"/>
    <property type="resolution" value="3.10 A"/>
    <property type="chains" value="Q=1-1173"/>
</dbReference>
<dbReference type="PDB" id="7OOP">
    <property type="method" value="EM"/>
    <property type="resolution" value="2.90 A"/>
    <property type="chains" value="S=1-1173"/>
</dbReference>
<dbReference type="PDB" id="7OPC">
    <property type="method" value="EM"/>
    <property type="resolution" value="3.00 A"/>
    <property type="chains" value="S=1-1173"/>
</dbReference>
<dbReference type="PDB" id="7OPD">
    <property type="method" value="EM"/>
    <property type="resolution" value="3.00 A"/>
    <property type="chains" value="S=1-1173"/>
</dbReference>
<dbReference type="PDB" id="7UNC">
    <property type="method" value="EM"/>
    <property type="resolution" value="3.00 A"/>
    <property type="chains" value="Q=1-1173"/>
</dbReference>
<dbReference type="PDB" id="7UND">
    <property type="method" value="EM"/>
    <property type="resolution" value="3.00 A"/>
    <property type="chains" value="Q=1-1173"/>
</dbReference>
<dbReference type="PDB" id="8A3Y">
    <property type="method" value="EM"/>
    <property type="resolution" value="3.30 A"/>
    <property type="chains" value="Q/U=1-1173"/>
</dbReference>
<dbReference type="PDB" id="9EGX">
    <property type="method" value="EM"/>
    <property type="resolution" value="2.90 A"/>
    <property type="chains" value="Q=1-1173"/>
</dbReference>
<dbReference type="PDB" id="9EGY">
    <property type="method" value="EM"/>
    <property type="resolution" value="2.90 A"/>
    <property type="chains" value="Q=1-1173"/>
</dbReference>
<dbReference type="PDB" id="9EGZ">
    <property type="method" value="EM"/>
    <property type="resolution" value="2.90 A"/>
    <property type="chains" value="Q=1-1173"/>
</dbReference>
<dbReference type="PDB" id="9EH0">
    <property type="method" value="EM"/>
    <property type="resolution" value="3.60 A"/>
    <property type="chains" value="Q=1-1173"/>
</dbReference>
<dbReference type="PDB" id="9EH1">
    <property type="method" value="EM"/>
    <property type="resolution" value="3.10 A"/>
    <property type="chains" value="Q=3-892"/>
</dbReference>
<dbReference type="PDB" id="9EH2">
    <property type="method" value="EM"/>
    <property type="resolution" value="3.10 A"/>
    <property type="chains" value="Q=1-1173"/>
</dbReference>
<dbReference type="PDBsum" id="5ZYQ"/>
<dbReference type="PDBsum" id="6GMH"/>
<dbReference type="PDBsum" id="6TED"/>
<dbReference type="PDBsum" id="7OOP"/>
<dbReference type="PDBsum" id="7OPC"/>
<dbReference type="PDBsum" id="7OPD"/>
<dbReference type="PDBsum" id="7UNC"/>
<dbReference type="PDBsum" id="7UND"/>
<dbReference type="PDBsum" id="8A3Y"/>
<dbReference type="PDBsum" id="9EGX"/>
<dbReference type="PDBsum" id="9EGY"/>
<dbReference type="PDBsum" id="9EGZ"/>
<dbReference type="PDBsum" id="9EH0"/>
<dbReference type="PDBsum" id="9EH1"/>
<dbReference type="PDBsum" id="9EH2"/>
<dbReference type="EMDB" id="EMD-0031"/>
<dbReference type="EMDB" id="EMD-10480"/>
<dbReference type="EMDB" id="EMD-13010"/>
<dbReference type="EMDB" id="EMD-13015"/>
<dbReference type="EMDB" id="EMD-13016"/>
<dbReference type="EMDB" id="EMD-26620"/>
<dbReference type="EMDB" id="EMD-26621"/>
<dbReference type="EMDB" id="EMD-48039"/>
<dbReference type="EMDB" id="EMD-48040"/>
<dbReference type="EMDB" id="EMD-48041"/>
<dbReference type="EMDB" id="EMD-48042"/>
<dbReference type="EMDB" id="EMD-48043"/>
<dbReference type="EMDB" id="EMD-48044"/>
<dbReference type="SMR" id="Q6PD62"/>
<dbReference type="BioGRID" id="115004">
    <property type="interactions" value="270"/>
</dbReference>
<dbReference type="ComplexPortal" id="CPX-2381">
    <property type="entry name" value="PAF1 complex"/>
</dbReference>
<dbReference type="CORUM" id="Q6PD62"/>
<dbReference type="DIP" id="DIP-31693N"/>
<dbReference type="FunCoup" id="Q6PD62">
    <property type="interactions" value="3477"/>
</dbReference>
<dbReference type="IntAct" id="Q6PD62">
    <property type="interactions" value="156"/>
</dbReference>
<dbReference type="MINT" id="Q6PD62"/>
<dbReference type="STRING" id="9606.ENSP00000355013"/>
<dbReference type="GlyGen" id="Q6PD62">
    <property type="glycosylation" value="1 site, 1 O-linked glycan (1 site)"/>
</dbReference>
<dbReference type="iPTMnet" id="Q6PD62"/>
<dbReference type="MetOSite" id="Q6PD62"/>
<dbReference type="PhosphoSitePlus" id="Q6PD62"/>
<dbReference type="BioMuta" id="CTR9"/>
<dbReference type="DMDM" id="74758318"/>
<dbReference type="jPOST" id="Q6PD62"/>
<dbReference type="MassIVE" id="Q6PD62"/>
<dbReference type="PaxDb" id="9606-ENSP00000355013"/>
<dbReference type="PeptideAtlas" id="Q6PD62"/>
<dbReference type="ProteomicsDB" id="67068"/>
<dbReference type="Pumba" id="Q6PD62"/>
<dbReference type="Antibodypedia" id="24416">
    <property type="antibodies" value="191 antibodies from 26 providers"/>
</dbReference>
<dbReference type="DNASU" id="9646"/>
<dbReference type="Ensembl" id="ENST00000361367.7">
    <property type="protein sequence ID" value="ENSP00000355013.2"/>
    <property type="gene ID" value="ENSG00000198730.10"/>
</dbReference>
<dbReference type="Ensembl" id="ENST00000715696.1">
    <property type="protein sequence ID" value="ENSP00000520504.1"/>
    <property type="gene ID" value="ENSG00000198730.10"/>
</dbReference>
<dbReference type="GeneID" id="9646"/>
<dbReference type="KEGG" id="hsa:9646"/>
<dbReference type="MANE-Select" id="ENST00000361367.7">
    <property type="protein sequence ID" value="ENSP00000355013.2"/>
    <property type="RefSeq nucleotide sequence ID" value="NM_014633.5"/>
    <property type="RefSeq protein sequence ID" value="NP_055448.1"/>
</dbReference>
<dbReference type="UCSC" id="uc001mja.4">
    <property type="organism name" value="human"/>
</dbReference>
<dbReference type="AGR" id="HGNC:16850"/>
<dbReference type="CTD" id="9646"/>
<dbReference type="DisGeNET" id="9646"/>
<dbReference type="GeneCards" id="CTR9"/>
<dbReference type="HGNC" id="HGNC:16850">
    <property type="gene designation" value="CTR9"/>
</dbReference>
<dbReference type="HPA" id="ENSG00000198730">
    <property type="expression patterns" value="Low tissue specificity"/>
</dbReference>
<dbReference type="MalaCards" id="CTR9"/>
<dbReference type="MIM" id="609366">
    <property type="type" value="gene"/>
</dbReference>
<dbReference type="neXtProt" id="NX_Q6PD62"/>
<dbReference type="OpenTargets" id="ENSG00000198730"/>
<dbReference type="PharmGKB" id="PA134896774"/>
<dbReference type="VEuPathDB" id="HostDB:ENSG00000198730"/>
<dbReference type="eggNOG" id="KOG2002">
    <property type="taxonomic scope" value="Eukaryota"/>
</dbReference>
<dbReference type="GeneTree" id="ENSGT00390000005097"/>
<dbReference type="HOGENOM" id="CLU_006386_0_0_1"/>
<dbReference type="InParanoid" id="Q6PD62"/>
<dbReference type="OMA" id="EHWLTIA"/>
<dbReference type="OrthoDB" id="343875at2759"/>
<dbReference type="PAN-GO" id="Q6PD62">
    <property type="GO annotations" value="4 GO annotations based on evolutionary models"/>
</dbReference>
<dbReference type="PhylomeDB" id="Q6PD62"/>
<dbReference type="TreeFam" id="TF314342"/>
<dbReference type="PathwayCommons" id="Q6PD62"/>
<dbReference type="Reactome" id="R-HSA-112382">
    <property type="pathway name" value="Formation of RNA Pol II elongation complex"/>
</dbReference>
<dbReference type="Reactome" id="R-HSA-674695">
    <property type="pathway name" value="RNA Polymerase II Pre-transcription Events"/>
</dbReference>
<dbReference type="Reactome" id="R-HSA-75955">
    <property type="pathway name" value="RNA Polymerase II Transcription Elongation"/>
</dbReference>
<dbReference type="Reactome" id="R-HSA-8866654">
    <property type="pathway name" value="E3 ubiquitin ligases ubiquitinate target proteins"/>
</dbReference>
<dbReference type="SignaLink" id="Q6PD62"/>
<dbReference type="SIGNOR" id="Q6PD62"/>
<dbReference type="BioGRID-ORCS" id="9646">
    <property type="hits" value="668 hits in 1175 CRISPR screens"/>
</dbReference>
<dbReference type="ChiTaRS" id="CTR9">
    <property type="organism name" value="human"/>
</dbReference>
<dbReference type="GeneWiki" id="CTR9"/>
<dbReference type="GenomeRNAi" id="9646"/>
<dbReference type="Pharos" id="Q6PD62">
    <property type="development level" value="Tbio"/>
</dbReference>
<dbReference type="PRO" id="PR:Q6PD62"/>
<dbReference type="Proteomes" id="UP000005640">
    <property type="component" value="Chromosome 11"/>
</dbReference>
<dbReference type="RNAct" id="Q6PD62">
    <property type="molecule type" value="protein"/>
</dbReference>
<dbReference type="Bgee" id="ENSG00000198730">
    <property type="expression patterns" value="Expressed in corpus epididymis and 211 other cell types or tissues"/>
</dbReference>
<dbReference type="ExpressionAtlas" id="Q6PD62">
    <property type="expression patterns" value="baseline and differential"/>
</dbReference>
<dbReference type="GO" id="GO:0016593">
    <property type="term" value="C:Cdc73/Paf1 complex"/>
    <property type="evidence" value="ECO:0000314"/>
    <property type="project" value="UniProtKB"/>
</dbReference>
<dbReference type="GO" id="GO:0000791">
    <property type="term" value="C:euchromatin"/>
    <property type="evidence" value="ECO:0000250"/>
    <property type="project" value="UniProtKB"/>
</dbReference>
<dbReference type="GO" id="GO:0016607">
    <property type="term" value="C:nuclear speck"/>
    <property type="evidence" value="ECO:0007669"/>
    <property type="project" value="UniProtKB-SubCell"/>
</dbReference>
<dbReference type="GO" id="GO:0005654">
    <property type="term" value="C:nucleoplasm"/>
    <property type="evidence" value="ECO:0000314"/>
    <property type="project" value="HPA"/>
</dbReference>
<dbReference type="GO" id="GO:0000993">
    <property type="term" value="F:RNA polymerase II complex binding"/>
    <property type="evidence" value="ECO:0000318"/>
    <property type="project" value="GO_Central"/>
</dbReference>
<dbReference type="GO" id="GO:0042169">
    <property type="term" value="F:SH2 domain binding"/>
    <property type="evidence" value="ECO:0007669"/>
    <property type="project" value="Ensembl"/>
</dbReference>
<dbReference type="GO" id="GO:0001832">
    <property type="term" value="P:blastocyst growth"/>
    <property type="evidence" value="ECO:0007669"/>
    <property type="project" value="Ensembl"/>
</dbReference>
<dbReference type="GO" id="GO:0001835">
    <property type="term" value="P:blastocyst hatching"/>
    <property type="evidence" value="ECO:0007669"/>
    <property type="project" value="Ensembl"/>
</dbReference>
<dbReference type="GO" id="GO:0007259">
    <property type="term" value="P:cell surface receptor signaling pathway via JAK-STAT"/>
    <property type="evidence" value="ECO:0000250"/>
    <property type="project" value="UniProtKB"/>
</dbReference>
<dbReference type="GO" id="GO:0071222">
    <property type="term" value="P:cellular response to lipopolysaccharide"/>
    <property type="evidence" value="ECO:0000250"/>
    <property type="project" value="UniProtKB"/>
</dbReference>
<dbReference type="GO" id="GO:0001711">
    <property type="term" value="P:endodermal cell fate commitment"/>
    <property type="evidence" value="ECO:0000250"/>
    <property type="project" value="UniProtKB"/>
</dbReference>
<dbReference type="GO" id="GO:0001826">
    <property type="term" value="P:inner cell mass cell differentiation"/>
    <property type="evidence" value="ECO:0007669"/>
    <property type="project" value="Ensembl"/>
</dbReference>
<dbReference type="GO" id="GO:0070102">
    <property type="term" value="P:interleukin-6-mediated signaling pathway"/>
    <property type="evidence" value="ECO:0000250"/>
    <property type="project" value="UniProtKB"/>
</dbReference>
<dbReference type="GO" id="GO:0045814">
    <property type="term" value="P:negative regulation of gene expression, epigenetic"/>
    <property type="evidence" value="ECO:0007669"/>
    <property type="project" value="Ensembl"/>
</dbReference>
<dbReference type="GO" id="GO:0045638">
    <property type="term" value="P:negative regulation of myeloid cell differentiation"/>
    <property type="evidence" value="ECO:0000314"/>
    <property type="project" value="UniProtKB"/>
</dbReference>
<dbReference type="GO" id="GO:0000122">
    <property type="term" value="P:negative regulation of transcription by RNA polymerase II"/>
    <property type="evidence" value="ECO:0000250"/>
    <property type="project" value="UniProtKB"/>
</dbReference>
<dbReference type="GO" id="GO:0045944">
    <property type="term" value="P:positive regulation of transcription by RNA polymerase II"/>
    <property type="evidence" value="ECO:0000314"/>
    <property type="project" value="UniProtKB"/>
</dbReference>
<dbReference type="GO" id="GO:0019827">
    <property type="term" value="P:stem cell population maintenance"/>
    <property type="evidence" value="ECO:0000314"/>
    <property type="project" value="UniProtKB"/>
</dbReference>
<dbReference type="GO" id="GO:0006368">
    <property type="term" value="P:transcription elongation by RNA polymerase II"/>
    <property type="evidence" value="ECO:0000314"/>
    <property type="project" value="GO_Central"/>
</dbReference>
<dbReference type="GO" id="GO:0001829">
    <property type="term" value="P:trophectodermal cell differentiation"/>
    <property type="evidence" value="ECO:0007669"/>
    <property type="project" value="Ensembl"/>
</dbReference>
<dbReference type="GO" id="GO:0016055">
    <property type="term" value="P:Wnt signaling pathway"/>
    <property type="evidence" value="ECO:0007669"/>
    <property type="project" value="UniProtKB-KW"/>
</dbReference>
<dbReference type="FunFam" id="1.25.40.10:FF:000089">
    <property type="entry name" value="CTR9 homolog, Paf1/RNA polymerase II complex component"/>
    <property type="match status" value="1"/>
</dbReference>
<dbReference type="FunFam" id="1.25.40.10:FF:000162">
    <property type="entry name" value="CTR9 homolog, Paf1/RNA polymerase II complex component"/>
    <property type="match status" value="1"/>
</dbReference>
<dbReference type="FunFam" id="1.25.40.10:FF:001026">
    <property type="entry name" value="CTR9 homolog, Paf1/RNA polymerase II complex component"/>
    <property type="match status" value="1"/>
</dbReference>
<dbReference type="Gene3D" id="1.25.40.10">
    <property type="entry name" value="Tetratricopeptide repeat domain"/>
    <property type="match status" value="3"/>
</dbReference>
<dbReference type="InterPro" id="IPR031101">
    <property type="entry name" value="Ctr9"/>
</dbReference>
<dbReference type="InterPro" id="IPR011990">
    <property type="entry name" value="TPR-like_helical_dom_sf"/>
</dbReference>
<dbReference type="InterPro" id="IPR019734">
    <property type="entry name" value="TPR_rpt"/>
</dbReference>
<dbReference type="PANTHER" id="PTHR14027">
    <property type="entry name" value="RNA POLYMERASE-ASSOCIATED PROTEIN CTR9"/>
    <property type="match status" value="1"/>
</dbReference>
<dbReference type="PANTHER" id="PTHR14027:SF2">
    <property type="entry name" value="RNA POLYMERASE-ASSOCIATED PROTEIN CTR9 HOMOLOG"/>
    <property type="match status" value="1"/>
</dbReference>
<dbReference type="Pfam" id="PF13374">
    <property type="entry name" value="TPR_10"/>
    <property type="match status" value="1"/>
</dbReference>
<dbReference type="Pfam" id="PF14559">
    <property type="entry name" value="TPR_19"/>
    <property type="match status" value="2"/>
</dbReference>
<dbReference type="Pfam" id="PF13181">
    <property type="entry name" value="TPR_8"/>
    <property type="match status" value="2"/>
</dbReference>
<dbReference type="SMART" id="SM00028">
    <property type="entry name" value="TPR"/>
    <property type="match status" value="10"/>
</dbReference>
<dbReference type="SUPFAM" id="SSF81901">
    <property type="entry name" value="HCP-like"/>
    <property type="match status" value="1"/>
</dbReference>
<dbReference type="SUPFAM" id="SSF48452">
    <property type="entry name" value="TPR-like"/>
    <property type="match status" value="3"/>
</dbReference>
<dbReference type="PROSITE" id="PS50005">
    <property type="entry name" value="TPR"/>
    <property type="match status" value="10"/>
</dbReference>
<dbReference type="PROSITE" id="PS50293">
    <property type="entry name" value="TPR_REGION"/>
    <property type="match status" value="1"/>
</dbReference>
<proteinExistence type="evidence at protein level"/>
<reference key="1">
    <citation type="journal article" date="1995" name="DNA Res.">
        <title>Prediction of the coding sequences of unidentified human genes. IV. The coding sequences of 40 new genes (KIAA0121-KIAA0160) deduced by analysis of cDNA clones from human cell line KG-1.</title>
        <authorList>
            <person name="Nagase T."/>
            <person name="Seki N."/>
            <person name="Tanaka A."/>
            <person name="Ishikawa K."/>
            <person name="Nomura N."/>
        </authorList>
    </citation>
    <scope>NUCLEOTIDE SEQUENCE [LARGE SCALE MRNA]</scope>
    <scope>TISSUE SPECIFICITY</scope>
    <source>
        <tissue>Bone marrow</tissue>
    </source>
</reference>
<reference key="2">
    <citation type="submission" date="1995-08" db="EMBL/GenBank/DDBJ databases">
        <authorList>
            <person name="Ohara O."/>
            <person name="Nagase T."/>
            <person name="Kikuno R."/>
            <person name="Nomura N."/>
        </authorList>
    </citation>
    <scope>SEQUENCE REVISION</scope>
</reference>
<reference key="3">
    <citation type="submission" date="2005-09" db="EMBL/GenBank/DDBJ databases">
        <authorList>
            <person name="Mural R.J."/>
            <person name="Istrail S."/>
            <person name="Sutton G.G."/>
            <person name="Florea L."/>
            <person name="Halpern A.L."/>
            <person name="Mobarry C.M."/>
            <person name="Lippert R."/>
            <person name="Walenz B."/>
            <person name="Shatkay H."/>
            <person name="Dew I."/>
            <person name="Miller J.R."/>
            <person name="Flanigan M.J."/>
            <person name="Edwards N.J."/>
            <person name="Bolanos R."/>
            <person name="Fasulo D."/>
            <person name="Halldorsson B.V."/>
            <person name="Hannenhalli S."/>
            <person name="Turner R."/>
            <person name="Yooseph S."/>
            <person name="Lu F."/>
            <person name="Nusskern D.R."/>
            <person name="Shue B.C."/>
            <person name="Zheng X.H."/>
            <person name="Zhong F."/>
            <person name="Delcher A.L."/>
            <person name="Huson D.H."/>
            <person name="Kravitz S.A."/>
            <person name="Mouchard L."/>
            <person name="Reinert K."/>
            <person name="Remington K.A."/>
            <person name="Clark A.G."/>
            <person name="Waterman M.S."/>
            <person name="Eichler E.E."/>
            <person name="Adams M.D."/>
            <person name="Hunkapiller M.W."/>
            <person name="Myers E.W."/>
            <person name="Venter J.C."/>
        </authorList>
    </citation>
    <scope>NUCLEOTIDE SEQUENCE [LARGE SCALE GENOMIC DNA]</scope>
</reference>
<reference key="4">
    <citation type="journal article" date="2004" name="Genome Res.">
        <title>The status, quality, and expansion of the NIH full-length cDNA project: the Mammalian Gene Collection (MGC).</title>
        <authorList>
            <consortium name="The MGC Project Team"/>
        </authorList>
    </citation>
    <scope>NUCLEOTIDE SEQUENCE [LARGE SCALE MRNA]</scope>
    <source>
        <tissue>Uterus</tissue>
    </source>
</reference>
<reference key="5">
    <citation type="journal article" date="2005" name="Genes Dev.">
        <title>The human PAF complex coordinates transcription with events downstream of RNA synthesis.</title>
        <authorList>
            <person name="Zhu B."/>
            <person name="Mandal S.S."/>
            <person name="Pham A.D."/>
            <person name="Zheng Y."/>
            <person name="Erdjument-Bromage H."/>
            <person name="Batra S.K."/>
            <person name="Tempst P."/>
            <person name="Reinberg D."/>
        </authorList>
    </citation>
    <scope>FUNCTION</scope>
    <scope>IDENTIFICATION IN THE PAF1 COMPLEX</scope>
</reference>
<reference key="6">
    <citation type="journal article" date="2005" name="Mol. Cell">
        <title>Monoubiquitination of human histone H2B: the factors involved and their roles in HOX gene regulation.</title>
        <authorList>
            <person name="Zhu B."/>
            <person name="Zheng Y."/>
            <person name="Pham A.-D."/>
            <person name="Mandal S.S."/>
            <person name="Erdjument-Bromage H."/>
            <person name="Tempst P."/>
            <person name="Reinberg D."/>
        </authorList>
    </citation>
    <scope>FUNCTION</scope>
</reference>
<reference key="7">
    <citation type="journal article" date="2006" name="Cell">
        <title>Global, in vivo, and site-specific phosphorylation dynamics in signaling networks.</title>
        <authorList>
            <person name="Olsen J.V."/>
            <person name="Blagoev B."/>
            <person name="Gnad F."/>
            <person name="Macek B."/>
            <person name="Kumar C."/>
            <person name="Mortensen P."/>
            <person name="Mann M."/>
        </authorList>
    </citation>
    <scope>PHOSPHORYLATION [LARGE SCALE ANALYSIS] AT THR-925; SER-941; SER-943 AND SER-970</scope>
    <scope>IDENTIFICATION BY MASS SPECTROMETRY [LARGE SCALE ANALYSIS]</scope>
    <source>
        <tissue>Cervix carcinoma</tissue>
    </source>
</reference>
<reference key="8">
    <citation type="journal article" date="2006" name="Nat. Biotechnol.">
        <title>A probability-based approach for high-throughput protein phosphorylation analysis and site localization.</title>
        <authorList>
            <person name="Beausoleil S.A."/>
            <person name="Villen J."/>
            <person name="Gerber S.A."/>
            <person name="Rush J."/>
            <person name="Gygi S.P."/>
        </authorList>
    </citation>
    <scope>PHOSPHORYLATION [LARGE SCALE ANALYSIS] AT SER-941; SER-943; SER-1020 AND SER-1021</scope>
    <scope>IDENTIFICATION BY MASS SPECTROMETRY [LARGE SCALE ANALYSIS]</scope>
    <source>
        <tissue>Cervix carcinoma</tissue>
    </source>
</reference>
<reference key="9">
    <citation type="journal article" date="2008" name="J. Proteome Res.">
        <title>Phosphorylation analysis of primary human T lymphocytes using sequential IMAC and titanium oxide enrichment.</title>
        <authorList>
            <person name="Carrascal M."/>
            <person name="Ovelleiro D."/>
            <person name="Casas V."/>
            <person name="Gay M."/>
            <person name="Abian J."/>
        </authorList>
    </citation>
    <scope>PHOSPHORYLATION [LARGE SCALE ANALYSIS] AT THR-925</scope>
    <scope>IDENTIFICATION BY MASS SPECTROMETRY [LARGE SCALE ANALYSIS]</scope>
    <source>
        <tissue>T-cell</tissue>
    </source>
</reference>
<reference key="10">
    <citation type="journal article" date="2008" name="Mol. Cell">
        <title>Kinase-selective enrichment enables quantitative phosphoproteomics of the kinome across the cell cycle.</title>
        <authorList>
            <person name="Daub H."/>
            <person name="Olsen J.V."/>
            <person name="Bairlein M."/>
            <person name="Gnad F."/>
            <person name="Oppermann F.S."/>
            <person name="Korner R."/>
            <person name="Greff Z."/>
            <person name="Keri G."/>
            <person name="Stemmann O."/>
            <person name="Mann M."/>
        </authorList>
    </citation>
    <scope>PHOSPHORYLATION [LARGE SCALE ANALYSIS] AT THR-925</scope>
    <scope>IDENTIFICATION BY MASS SPECTROMETRY [LARGE SCALE ANALYSIS]</scope>
    <source>
        <tissue>Cervix carcinoma</tissue>
    </source>
</reference>
<reference key="11">
    <citation type="journal article" date="2008" name="Proc. Natl. Acad. Sci. U.S.A.">
        <title>A quantitative atlas of mitotic phosphorylation.</title>
        <authorList>
            <person name="Dephoure N."/>
            <person name="Zhou C."/>
            <person name="Villen J."/>
            <person name="Beausoleil S.A."/>
            <person name="Bakalarski C.E."/>
            <person name="Elledge S.J."/>
            <person name="Gygi S.P."/>
        </authorList>
    </citation>
    <scope>PHOSPHORYLATION [LARGE SCALE ANALYSIS] AT THR-925 AND SER-970</scope>
    <scope>IDENTIFICATION BY MASS SPECTROMETRY [LARGE SCALE ANALYSIS]</scope>
    <source>
        <tissue>Cervix carcinoma</tissue>
    </source>
</reference>
<reference key="12">
    <citation type="journal article" date="2009" name="Anal. Chem.">
        <title>Lys-N and trypsin cover complementary parts of the phosphoproteome in a refined SCX-based approach.</title>
        <authorList>
            <person name="Gauci S."/>
            <person name="Helbig A.O."/>
            <person name="Slijper M."/>
            <person name="Krijgsveld J."/>
            <person name="Heck A.J."/>
            <person name="Mohammed S."/>
        </authorList>
    </citation>
    <scope>IDENTIFICATION BY MASS SPECTROMETRY [LARGE SCALE ANALYSIS]</scope>
</reference>
<reference key="13">
    <citation type="journal article" date="2009" name="Cell Stem Cell">
        <title>A genome-scale RNAi screen for Oct4 modulators defines a role of the Paf1 complex for embryonic stem cell identity.</title>
        <authorList>
            <person name="Ding L."/>
            <person name="Paszkowski-Rogacz M."/>
            <person name="Nitzsche A."/>
            <person name="Slabicki M.M."/>
            <person name="Heninger A.K."/>
            <person name="de Vries I."/>
            <person name="Kittler R."/>
            <person name="Junqueira M."/>
            <person name="Shevchenko A."/>
            <person name="Schulz H."/>
            <person name="Hubner N."/>
            <person name="Doss M.X."/>
            <person name="Sachinidis A."/>
            <person name="Hescheler J."/>
            <person name="Iacone R."/>
            <person name="Anastassiadis K."/>
            <person name="Stewart A.F."/>
            <person name="Pisabarro M.T."/>
            <person name="Caldarelli A."/>
            <person name="Poser I."/>
            <person name="Theis M."/>
            <person name="Buchholz F."/>
        </authorList>
    </citation>
    <scope>FUNCTION</scope>
</reference>
<reference key="14">
    <citation type="journal article" date="2009" name="Genes Dev.">
        <title>DSIF, the Paf1 complex, and Tat-SF1 have nonredundant, cooperative roles in RNA polymerase II elongation.</title>
        <authorList>
            <person name="Chen Y."/>
            <person name="Yamaguchi Y."/>
            <person name="Tsugeno Y."/>
            <person name="Yamamoto J."/>
            <person name="Yamada T."/>
            <person name="Nakamura M."/>
            <person name="Hisatake K."/>
            <person name="Handa H."/>
        </authorList>
    </citation>
    <scope>IDENTIFICATION IN THE PAF1 COMPLEX</scope>
    <scope>FUNCTION OF THE PAF1 COMPLEX</scope>
</reference>
<reference key="15">
    <citation type="journal article" date="2009" name="Sci. Signal.">
        <title>Quantitative phosphoproteomic analysis of T cell receptor signaling reveals system-wide modulation of protein-protein interactions.</title>
        <authorList>
            <person name="Mayya V."/>
            <person name="Lundgren D.H."/>
            <person name="Hwang S.-I."/>
            <person name="Rezaul K."/>
            <person name="Wu L."/>
            <person name="Eng J.K."/>
            <person name="Rodionov V."/>
            <person name="Han D.K."/>
        </authorList>
    </citation>
    <scope>PHOSPHORYLATION [LARGE SCALE ANALYSIS] AT THR-925 AND SER-932</scope>
    <scope>IDENTIFICATION BY MASS SPECTROMETRY [LARGE SCALE ANALYSIS]</scope>
    <source>
        <tissue>Leukemic T-cell</tissue>
    </source>
</reference>
<reference key="16">
    <citation type="journal article" date="2010" name="Cancer Cell">
        <title>The PAF complex synergizes with MLL fusion proteins at HOX loci to promote leukemogenesis.</title>
        <authorList>
            <person name="Muntean A.G."/>
            <person name="Tan J."/>
            <person name="Sitwala K."/>
            <person name="Huang Y."/>
            <person name="Bronstein J."/>
            <person name="Connelly J.A."/>
            <person name="Basrur V."/>
            <person name="Elenitoba-Johnson K.S."/>
            <person name="Hess J.L."/>
        </authorList>
    </citation>
    <scope>FUNCTION OF THE PAF1 COMPLEX</scope>
    <scope>INTERACTION WITH KMT2A</scope>
</reference>
<reference key="17">
    <citation type="journal article" date="2010" name="Cell">
        <title>The human PAF1 complex acts in chromatin transcription elongation both independently and cooperatively with SII/TFIIS.</title>
        <authorList>
            <person name="Kim J."/>
            <person name="Guermah M."/>
            <person name="Roeder R.G."/>
        </authorList>
    </citation>
    <scope>IDENTIFICATION IN THE PAF1 COMPLEX</scope>
    <scope>COMPOSITION OF THE PAF1 COMPLEX</scope>
    <scope>FUNCTION OF THE PAF1 COMPLEX</scope>
</reference>
<reference key="18">
    <citation type="journal article" date="2010" name="Sci. Signal.">
        <title>Quantitative phosphoproteomics reveals widespread full phosphorylation site occupancy during mitosis.</title>
        <authorList>
            <person name="Olsen J.V."/>
            <person name="Vermeulen M."/>
            <person name="Santamaria A."/>
            <person name="Kumar C."/>
            <person name="Miller M.L."/>
            <person name="Jensen L.J."/>
            <person name="Gnad F."/>
            <person name="Cox J."/>
            <person name="Jensen T.S."/>
            <person name="Nigg E.A."/>
            <person name="Brunak S."/>
            <person name="Mann M."/>
        </authorList>
    </citation>
    <scope>PHOSPHORYLATION [LARGE SCALE ANALYSIS] AT THR-925; SER-941; SER-943 AND SER-970</scope>
    <scope>IDENTIFICATION BY MASS SPECTROMETRY [LARGE SCALE ANALYSIS]</scope>
    <source>
        <tissue>Cervix carcinoma</tissue>
    </source>
</reference>
<reference key="19">
    <citation type="journal article" date="2011" name="BMC Syst. Biol.">
        <title>Initial characterization of the human central proteome.</title>
        <authorList>
            <person name="Burkard T.R."/>
            <person name="Planyavsky M."/>
            <person name="Kaupe I."/>
            <person name="Breitwieser F.P."/>
            <person name="Buerckstuemmer T."/>
            <person name="Bennett K.L."/>
            <person name="Superti-Furga G."/>
            <person name="Colinge J."/>
        </authorList>
    </citation>
    <scope>IDENTIFICATION BY MASS SPECTROMETRY [LARGE SCALE ANALYSIS]</scope>
</reference>
<reference key="20">
    <citation type="journal article" date="2011" name="Mol. Cell">
        <title>Transcriptional activators enhance polyadenylation of mRNA precursors.</title>
        <authorList>
            <person name="Nagaike T."/>
            <person name="Logan C."/>
            <person name="Hotta I."/>
            <person name="Rozenblatt-Rosen O."/>
            <person name="Meyerson M."/>
            <person name="Manley J.L."/>
        </authorList>
    </citation>
    <scope>FUNCTION</scope>
    <scope>FUNCTION OF THE PAF1 COMPLEX</scope>
</reference>
<reference key="21">
    <citation type="journal article" date="2011" name="Sci. Signal.">
        <title>System-wide temporal characterization of the proteome and phosphoproteome of human embryonic stem cell differentiation.</title>
        <authorList>
            <person name="Rigbolt K.T."/>
            <person name="Prokhorova T.A."/>
            <person name="Akimov V."/>
            <person name="Henningsen J."/>
            <person name="Johansen P.T."/>
            <person name="Kratchmarova I."/>
            <person name="Kassem M."/>
            <person name="Mann M."/>
            <person name="Olsen J.V."/>
            <person name="Blagoev B."/>
        </authorList>
    </citation>
    <scope>PHOSPHORYLATION [LARGE SCALE ANALYSIS] AT THR-925; SER-941; SER-943; SER-970; SER-1020; SER-1021; SER-1097 AND SER-1102</scope>
    <scope>IDENTIFICATION BY MASS SPECTROMETRY [LARGE SCALE ANALYSIS]</scope>
</reference>
<reference key="22">
    <citation type="journal article" date="2013" name="J. Proteome Res.">
        <title>Toward a comprehensive characterization of a human cancer cell phosphoproteome.</title>
        <authorList>
            <person name="Zhou H."/>
            <person name="Di Palma S."/>
            <person name="Preisinger C."/>
            <person name="Peng M."/>
            <person name="Polat A.N."/>
            <person name="Heck A.J."/>
            <person name="Mohammed S."/>
        </authorList>
    </citation>
    <scope>PHOSPHORYLATION [LARGE SCALE ANALYSIS] AT THR-925 AND SER-970</scope>
    <scope>IDENTIFICATION BY MASS SPECTROMETRY [LARGE SCALE ANALYSIS]</scope>
    <source>
        <tissue>Cervix carcinoma</tissue>
        <tissue>Erythroleukemia</tissue>
    </source>
</reference>
<reference key="23">
    <citation type="journal article" date="2014" name="J. Proteomics">
        <title>An enzyme assisted RP-RPLC approach for in-depth analysis of human liver phosphoproteome.</title>
        <authorList>
            <person name="Bian Y."/>
            <person name="Song C."/>
            <person name="Cheng K."/>
            <person name="Dong M."/>
            <person name="Wang F."/>
            <person name="Huang J."/>
            <person name="Sun D."/>
            <person name="Wang L."/>
            <person name="Ye M."/>
            <person name="Zou H."/>
        </authorList>
    </citation>
    <scope>PHOSPHORYLATION [LARGE SCALE ANALYSIS] AT THR-925 AND SER-1087</scope>
    <scope>IDENTIFICATION BY MASS SPECTROMETRY [LARGE SCALE ANALYSIS]</scope>
    <source>
        <tissue>Liver</tissue>
    </source>
</reference>
<reference key="24">
    <citation type="journal article" date="2015" name="PLoS ONE">
        <title>Identification of Novel Proteins Co-Purifying with Cockayne Syndrome Group B (CSB) Reveals Potential Roles for CSB in RNA Metabolism and Chromatin Dynamics.</title>
        <authorList>
            <person name="Nicolai S."/>
            <person name="Filippi S."/>
            <person name="Caputo M."/>
            <person name="Cipak L."/>
            <person name="Gregan J."/>
            <person name="Ammerer G."/>
            <person name="Frontini M."/>
            <person name="Willems D."/>
            <person name="Prantera G."/>
            <person name="Balajee A.S."/>
            <person name="Proietti-De-Santis L."/>
        </authorList>
    </citation>
    <scope>INTERACTION WITH ERCC6</scope>
</reference>
<reference key="25">
    <citation type="journal article" date="2018" name="Cell">
        <title>Comparative Flavivirus-Host Protein Interaction Mapping Reveals Mechanisms of Dengue and Zika Virus Pathogenesis.</title>
        <authorList>
            <person name="Shah P.S."/>
            <person name="Link N."/>
            <person name="Jang G.M."/>
            <person name="Sharp P.P."/>
            <person name="Zhu T."/>
            <person name="Swaney D.L."/>
            <person name="Johnson J.R."/>
            <person name="Von Dollen J."/>
            <person name="Ramage H.R."/>
            <person name="Satkamp L."/>
            <person name="Newton B."/>
            <person name="Huettenhain R."/>
            <person name="Petit M.J."/>
            <person name="Baum T."/>
            <person name="Everitt A."/>
            <person name="Laufman O."/>
            <person name="Tassetto M."/>
            <person name="Shales M."/>
            <person name="Stevenson E."/>
            <person name="Iglesias G.N."/>
            <person name="Shokat L."/>
            <person name="Tripathi S."/>
            <person name="Balasubramaniam V."/>
            <person name="Webb L.G."/>
            <person name="Aguirre S."/>
            <person name="Willsey A.J."/>
            <person name="Garcia-Sastre A."/>
            <person name="Pollard K.S."/>
            <person name="Cherry S."/>
            <person name="Gamarnik A.V."/>
            <person name="Marazzi I."/>
            <person name="Taunton J."/>
            <person name="Fernandez-Sesma A."/>
            <person name="Bellen H.J."/>
            <person name="Andino R."/>
            <person name="Krogan N.J."/>
        </authorList>
    </citation>
    <scope>INTERACTION WITH ZIKA VIRUS FRENCH POLYNESIA 10087PF/2013 NS5; DENGUE VIRUS DENV2 16681 NS5 AND DENGUE VIRUS DENV4 DOMINICA/814669/1981 NS5</scope>
</reference>
<feature type="chain" id="PRO_0000231588" description="RNA polymerase-associated protein CTR9 homolog">
    <location>
        <begin position="1"/>
        <end position="1173"/>
    </location>
</feature>
<feature type="repeat" description="TPR 1">
    <location>
        <begin position="41"/>
        <end position="75"/>
    </location>
</feature>
<feature type="repeat" description="TPR 2">
    <location>
        <begin position="129"/>
        <end position="162"/>
    </location>
</feature>
<feature type="repeat" description="TPR 3">
    <location>
        <begin position="163"/>
        <end position="196"/>
    </location>
</feature>
<feature type="repeat" description="TPR 4">
    <location>
        <begin position="198"/>
        <end position="231"/>
    </location>
</feature>
<feature type="repeat" description="TPR 5">
    <location>
        <begin position="235"/>
        <end position="268"/>
    </location>
</feature>
<feature type="repeat" description="TPR 6">
    <location>
        <begin position="306"/>
        <end position="339"/>
    </location>
</feature>
<feature type="repeat" description="TPR 7">
    <location>
        <begin position="341"/>
        <end position="374"/>
    </location>
</feature>
<feature type="repeat" description="TPR 8">
    <location>
        <begin position="412"/>
        <end position="444"/>
    </location>
</feature>
<feature type="repeat" description="TPR 9">
    <location>
        <begin position="451"/>
        <end position="484"/>
    </location>
</feature>
<feature type="repeat" description="TPR 10">
    <location>
        <begin position="497"/>
        <end position="530"/>
    </location>
</feature>
<feature type="repeat" description="TPR 11">
    <location>
        <begin position="531"/>
        <end position="564"/>
    </location>
</feature>
<feature type="repeat" description="TPR 12">
    <location>
        <begin position="566"/>
        <end position="598"/>
    </location>
</feature>
<feature type="repeat" description="TPR 13">
    <location>
        <begin position="613"/>
        <end position="646"/>
    </location>
</feature>
<feature type="repeat" description="TPR 14">
    <location>
        <begin position="647"/>
        <end position="680"/>
    </location>
</feature>
<feature type="repeat" description="TPR 15">
    <location>
        <begin position="681"/>
        <end position="714"/>
    </location>
</feature>
<feature type="repeat" description="TPR 16">
    <location>
        <begin position="717"/>
        <end position="750"/>
    </location>
</feature>
<feature type="region of interest" description="Disordered" evidence="2">
    <location>
        <begin position="892"/>
        <end position="1173"/>
    </location>
</feature>
<feature type="compositionally biased region" description="Basic residues" evidence="2">
    <location>
        <begin position="900"/>
        <end position="912"/>
    </location>
</feature>
<feature type="compositionally biased region" description="Acidic residues" evidence="2">
    <location>
        <begin position="917"/>
        <end position="929"/>
    </location>
</feature>
<feature type="compositionally biased region" description="Basic residues" evidence="2">
    <location>
        <begin position="955"/>
        <end position="964"/>
    </location>
</feature>
<feature type="compositionally biased region" description="Basic residues" evidence="2">
    <location>
        <begin position="980"/>
        <end position="994"/>
    </location>
</feature>
<feature type="compositionally biased region" description="Basic and acidic residues" evidence="2">
    <location>
        <begin position="1023"/>
        <end position="1034"/>
    </location>
</feature>
<feature type="compositionally biased region" description="Polar residues" evidence="2">
    <location>
        <begin position="1098"/>
        <end position="1128"/>
    </location>
</feature>
<feature type="compositionally biased region" description="Basic and acidic residues" evidence="2">
    <location>
        <begin position="1129"/>
        <end position="1139"/>
    </location>
</feature>
<feature type="compositionally biased region" description="Low complexity" evidence="2">
    <location>
        <begin position="1148"/>
        <end position="1159"/>
    </location>
</feature>
<feature type="compositionally biased region" description="Basic and acidic residues" evidence="2">
    <location>
        <begin position="1160"/>
        <end position="1173"/>
    </location>
</feature>
<feature type="modified residue" description="Phosphothreonine" evidence="15 16 17 18 19 20 21 22 23">
    <location>
        <position position="925"/>
    </location>
</feature>
<feature type="modified residue" description="Phosphoserine" evidence="19">
    <location>
        <position position="932"/>
    </location>
</feature>
<feature type="modified residue" description="Phosphoserine" evidence="14 15 20 21">
    <location>
        <position position="941"/>
    </location>
</feature>
<feature type="modified residue" description="Phosphoserine" evidence="14 15 20 21">
    <location>
        <position position="943"/>
    </location>
</feature>
<feature type="modified residue" description="Phosphoserine" evidence="15 16 20 21 22">
    <location>
        <position position="970"/>
    </location>
</feature>
<feature type="modified residue" description="Phosphoserine" evidence="14 21">
    <location>
        <position position="1020"/>
    </location>
</feature>
<feature type="modified residue" description="Phosphoserine" evidence="14 21">
    <location>
        <position position="1021"/>
    </location>
</feature>
<feature type="modified residue" description="Phosphoserine" evidence="1">
    <location>
        <position position="1039"/>
    </location>
</feature>
<feature type="modified residue" description="Phosphoserine" evidence="1">
    <location>
        <position position="1041"/>
    </location>
</feature>
<feature type="modified residue" description="Phosphoserine" evidence="1">
    <location>
        <position position="1043"/>
    </location>
</feature>
<feature type="modified residue" description="Phosphoserine" evidence="1">
    <location>
        <position position="1081"/>
    </location>
</feature>
<feature type="modified residue" description="Phosphoserine" evidence="1">
    <location>
        <position position="1085"/>
    </location>
</feature>
<feature type="modified residue" description="Phosphoserine" evidence="23">
    <location>
        <position position="1087"/>
    </location>
</feature>
<feature type="modified residue" description="Phosphoserine" evidence="21">
    <location>
        <position position="1097"/>
    </location>
</feature>
<feature type="modified residue" description="Phosphoserine" evidence="21">
    <location>
        <position position="1102"/>
    </location>
</feature>
<feature type="strand" evidence="24">
    <location>
        <begin position="5"/>
        <end position="9"/>
    </location>
</feature>
<feature type="strand" evidence="27">
    <location>
        <begin position="11"/>
        <end position="13"/>
    </location>
</feature>
<feature type="strand" evidence="24">
    <location>
        <begin position="16"/>
        <end position="20"/>
    </location>
</feature>
<feature type="helix" evidence="24">
    <location>
        <begin position="21"/>
        <end position="23"/>
    </location>
</feature>
<feature type="helix" evidence="24">
    <location>
        <begin position="27"/>
        <end position="36"/>
    </location>
</feature>
<feature type="helix" evidence="24">
    <location>
        <begin position="41"/>
        <end position="53"/>
    </location>
</feature>
<feature type="helix" evidence="24">
    <location>
        <begin position="57"/>
        <end position="70"/>
    </location>
</feature>
<feature type="strand" evidence="27">
    <location>
        <begin position="71"/>
        <end position="77"/>
    </location>
</feature>
<feature type="helix" evidence="24">
    <location>
        <begin position="78"/>
        <end position="99"/>
    </location>
</feature>
<feature type="helix" evidence="24">
    <location>
        <begin position="103"/>
        <end position="121"/>
    </location>
</feature>
<feature type="helix" evidence="24">
    <location>
        <begin position="128"/>
        <end position="140"/>
    </location>
</feature>
<feature type="strand" evidence="24">
    <location>
        <begin position="141"/>
        <end position="143"/>
    </location>
</feature>
<feature type="helix" evidence="24">
    <location>
        <begin position="145"/>
        <end position="156"/>
    </location>
</feature>
<feature type="helix" evidence="24">
    <location>
        <begin position="163"/>
        <end position="175"/>
    </location>
</feature>
<feature type="helix" evidence="24">
    <location>
        <begin position="179"/>
        <end position="192"/>
    </location>
</feature>
<feature type="helix" evidence="24">
    <location>
        <begin position="199"/>
        <end position="210"/>
    </location>
</feature>
<feature type="helix" evidence="24">
    <location>
        <begin position="214"/>
        <end position="227"/>
    </location>
</feature>
<feature type="helix" evidence="24">
    <location>
        <begin position="232"/>
        <end position="241"/>
    </location>
</feature>
<feature type="strand" evidence="27">
    <location>
        <begin position="246"/>
        <end position="249"/>
    </location>
</feature>
<feature type="helix" evidence="27">
    <location>
        <begin position="250"/>
        <end position="254"/>
    </location>
</feature>
<feature type="turn" evidence="27">
    <location>
        <begin position="255"/>
        <end position="258"/>
    </location>
</feature>
<feature type="helix" evidence="27">
    <location>
        <begin position="259"/>
        <end position="264"/>
    </location>
</feature>
<feature type="helix" evidence="27">
    <location>
        <begin position="269"/>
        <end position="281"/>
    </location>
</feature>
<feature type="helix" evidence="27">
    <location>
        <begin position="287"/>
        <end position="297"/>
    </location>
</feature>
<feature type="helix" evidence="27">
    <location>
        <begin position="302"/>
        <end position="318"/>
    </location>
</feature>
<feature type="helix" evidence="27">
    <location>
        <begin position="322"/>
        <end position="335"/>
    </location>
</feature>
<feature type="strand" evidence="27">
    <location>
        <begin position="337"/>
        <end position="339"/>
    </location>
</feature>
<feature type="helix" evidence="27">
    <location>
        <begin position="342"/>
        <end position="352"/>
    </location>
</feature>
<feature type="helix" evidence="27">
    <location>
        <begin position="353"/>
        <end position="355"/>
    </location>
</feature>
<feature type="helix" evidence="27">
    <location>
        <begin position="357"/>
        <end position="370"/>
    </location>
</feature>
<feature type="helix" evidence="27">
    <location>
        <begin position="375"/>
        <end position="382"/>
    </location>
</feature>
<feature type="helix" evidence="27">
    <location>
        <begin position="391"/>
        <end position="404"/>
    </location>
</feature>
<feature type="helix" evidence="27">
    <location>
        <begin position="414"/>
        <end position="422"/>
    </location>
</feature>
<feature type="helix" evidence="27">
    <location>
        <begin position="427"/>
        <end position="443"/>
    </location>
</feature>
<feature type="helix" evidence="27">
    <location>
        <begin position="451"/>
        <end position="463"/>
    </location>
</feature>
<feature type="helix" evidence="27">
    <location>
        <begin position="467"/>
        <end position="483"/>
    </location>
</feature>
<feature type="turn" evidence="27">
    <location>
        <begin position="488"/>
        <end position="491"/>
    </location>
</feature>
<feature type="helix" evidence="27">
    <location>
        <begin position="492"/>
        <end position="509"/>
    </location>
</feature>
<feature type="helix" evidence="27">
    <location>
        <begin position="513"/>
        <end position="526"/>
    </location>
</feature>
<feature type="helix" evidence="27">
    <location>
        <begin position="532"/>
        <end position="544"/>
    </location>
</feature>
<feature type="turn" evidence="27">
    <location>
        <begin position="547"/>
        <end position="549"/>
    </location>
</feature>
<feature type="helix" evidence="27">
    <location>
        <begin position="550"/>
        <end position="560"/>
    </location>
</feature>
<feature type="helix" evidence="27">
    <location>
        <begin position="565"/>
        <end position="575"/>
    </location>
</feature>
<feature type="turn" evidence="26">
    <location>
        <begin position="582"/>
        <end position="584"/>
    </location>
</feature>
<feature type="helix" evidence="27">
    <location>
        <begin position="585"/>
        <end position="588"/>
    </location>
</feature>
<feature type="turn" evidence="27">
    <location>
        <begin position="589"/>
        <end position="592"/>
    </location>
</feature>
<feature type="turn" evidence="27">
    <location>
        <begin position="595"/>
        <end position="597"/>
    </location>
</feature>
<feature type="helix" evidence="27">
    <location>
        <begin position="601"/>
        <end position="612"/>
    </location>
</feature>
<feature type="turn" evidence="27">
    <location>
        <begin position="618"/>
        <end position="623"/>
    </location>
</feature>
<feature type="helix" evidence="27">
    <location>
        <begin position="624"/>
        <end position="642"/>
    </location>
</feature>
<feature type="strand" evidence="27">
    <location>
        <begin position="644"/>
        <end position="646"/>
    </location>
</feature>
<feature type="helix" evidence="27">
    <location>
        <begin position="647"/>
        <end position="659"/>
    </location>
</feature>
<feature type="turn" evidence="25">
    <location>
        <begin position="660"/>
        <end position="662"/>
    </location>
</feature>
<feature type="turn" evidence="27">
    <location>
        <begin position="664"/>
        <end position="666"/>
    </location>
</feature>
<feature type="helix" evidence="27">
    <location>
        <begin position="667"/>
        <end position="676"/>
    </location>
</feature>
<feature type="helix" evidence="27">
    <location>
        <begin position="681"/>
        <end position="693"/>
    </location>
</feature>
<feature type="helix" evidence="27">
    <location>
        <begin position="697"/>
        <end position="707"/>
    </location>
</feature>
<feature type="strand" evidence="27">
    <location>
        <begin position="710"/>
        <end position="712"/>
    </location>
</feature>
<feature type="helix" evidence="27">
    <location>
        <begin position="717"/>
        <end position="723"/>
    </location>
</feature>
<feature type="strand" evidence="27">
    <location>
        <begin position="724"/>
        <end position="726"/>
    </location>
</feature>
<feature type="turn" evidence="27">
    <location>
        <begin position="731"/>
        <end position="733"/>
    </location>
</feature>
<feature type="helix" evidence="27">
    <location>
        <begin position="734"/>
        <end position="746"/>
    </location>
</feature>
<feature type="strand" evidence="25">
    <location>
        <begin position="748"/>
        <end position="750"/>
    </location>
</feature>
<feature type="helix" evidence="27">
    <location>
        <begin position="751"/>
        <end position="766"/>
    </location>
</feature>
<feature type="strand" evidence="27">
    <location>
        <begin position="768"/>
        <end position="771"/>
    </location>
</feature>
<feature type="helix" evidence="27">
    <location>
        <begin position="776"/>
        <end position="798"/>
    </location>
</feature>
<feature type="strand" evidence="27">
    <location>
        <begin position="803"/>
        <end position="805"/>
    </location>
</feature>
<feature type="helix" evidence="27">
    <location>
        <begin position="810"/>
        <end position="891"/>
    </location>
</feature>
<gene>
    <name type="primary">CTR9</name>
    <name type="synonym">KIAA0155</name>
    <name type="synonym">SH2BP1</name>
</gene>
<comment type="function">
    <text evidence="1 3 4 5 6 7 8 9">Component of the PAF1 complex (PAF1C) which has multiple functions during transcription by RNA polymerase II and is implicated in regulation of development and maintenance of embryonic stem cell pluripotency. PAF1C associates with RNA polymerase II through interaction with POLR2A CTD non-phosphorylated and 'Ser-2'- and 'Ser-5'-phosphorylated forms and is involved in transcriptional elongation, acting both independently and synergistically with TCEA1 and in cooperation with the DSIF complex and HTATSF1. PAF1C is required for transcription of Hox and Wnt target genes. PAF1C is involved in hematopoiesis and stimulates transcriptional activity of KMT2A/MLL1; it promotes leukemogenesis through association with KMT2A/MLL1-rearranged oncoproteins, such as KMT2A/MLL1-MLLT3/AF9 and KMT2A/MLL1-MLLT1/ENL. PAF1C is involved in histone modifications such as ubiquitination of histone H2B and methylation on histone H3 'Lys-4' (H3K4me3). PAF1C recruits the RNF20/40 E3 ubiquitin-protein ligase complex and the E2 enzyme UBE2A or UBE2B to chromatin which mediate monoubiquitination of 'Lys-120' of histone H2B (H2BK120ub1); UB2A/B-mediated H2B ubiquitination is proposed to be coupled to transcription. PAF1C is involved in mRNA 3' end formation probably through association with cleavage and poly(A) factors. In case of infection by influenza A strain H3N2, PAF1C associates with viral NS1 protein, thereby regulating gene transcription. Required for mono- and trimethylation on histone H3 'Lys-4' (H3K4me3) and dimethylation on histone H3 'Lys-79' (H3K4me3). Required for Hox gene transcription. Required for the trimethylation of histone H3 'Lys-4' (H3K4me3) on genes involved in stem cell pluripotency; this function is synergistic with CXXC1 indicative for an involvement of the SET1 complex. Involved in transcriptional regulation of IL6-responsive genes and in JAK-STAT pathway; may regulate DNA-association of STAT3 (By similarity).</text>
</comment>
<comment type="subunit">
    <text evidence="1 3 6 7 8 10">Component of the PAF1 complex, which consists of CDC73, PAF1, LEO1, CTR9, RTF1 and SKIC8 (PubMed:16024656, PubMed:19952111, PubMed:20178742). The PAF1 complex interacts with PHF5A (By similarity). Interacts with KMT2A/MLL1 (PubMed:20541477). Interacts with STAT3 (By similarity). Interacts with SETD5 (By similarity). Interacts with ERCC6 (PubMed:26030138).</text>
</comment>
<comment type="subunit">
    <text evidence="11">(Microbial infection) The PAF1 complex interacts with Zika virus French Polynesia 10087PF/2013 non-structural protein 5/NS5 (PubMed:30550790). The interaction with viral NS5 proteins may reduce the antiviral immune response by inhibiting the recruitment of the PAF1 complex to interferon-stimulated genes, thus preventing their transcription (PubMed:30550790).</text>
</comment>
<comment type="subunit">
    <text evidence="11">(Microbial infection) The PAF1 complex interacts with Dengue virus DENV2 16681 non-structural protein 5/NS5 (PubMed:30550790). The PAF1 complex interacts with Dengue virus DENV4 Dominica/814669/1981 non-structural protein 5/NS5 (PubMed:30550790). The interaction with viral NS5 proteins may reduce the antiviral immune response by inhibiting the recruitment of the PAF1 complex to interferon-stimulated genes, thus preventing their transcription (PubMed:30550790).</text>
</comment>
<comment type="interaction">
    <interactant intactId="EBI-1019583">
        <id>Q6PD62</id>
    </interactant>
    <interactant intactId="EBI-930143">
        <id>Q6P1J9</id>
        <label>CDC73</label>
    </interactant>
    <organismsDiffer>false</organismsDiffer>
    <experiments>25</experiments>
</comment>
<comment type="interaction">
    <interactant intactId="EBI-1019583">
        <id>Q6PD62</id>
    </interactant>
    <interactant intactId="EBI-591370">
        <id>Q03164</id>
        <label>KMT2A</label>
    </interactant>
    <organismsDiffer>false</organismsDiffer>
    <experiments>5</experiments>
</comment>
<comment type="interaction">
    <interactant intactId="EBI-1019583">
        <id>Q6PD62</id>
    </interactant>
    <interactant intactId="EBI-2607770">
        <id>Q8N7H5</id>
        <label>PAF1</label>
    </interactant>
    <organismsDiffer>false</organismsDiffer>
    <experiments>29</experiments>
</comment>
<comment type="interaction">
    <interactant intactId="EBI-1019583">
        <id>Q6PD62</id>
    </interactant>
    <interactant intactId="EBI-358545">
        <id>Q9GZS3</id>
        <label>SKIC8</label>
    </interactant>
    <organismsDiffer>false</organismsDiffer>
    <experiments>14</experiments>
</comment>
<comment type="subcellular location">
    <subcellularLocation>
        <location evidence="1">Nucleus speckle</location>
    </subcellularLocation>
</comment>
<comment type="tissue specificity">
    <text evidence="12">Widely expressed.</text>
</comment>
<comment type="sequence caution" evidence="13">
    <conflict type="erroneous initiation">
        <sequence resource="EMBL-CDS" id="BAA09925"/>
    </conflict>
</comment>
<protein>
    <recommendedName>
        <fullName>RNA polymerase-associated protein CTR9 homolog</fullName>
    </recommendedName>
    <alternativeName>
        <fullName>SH2 domain-binding protein 1</fullName>
    </alternativeName>
</protein>
<keyword id="KW-0002">3D-structure</keyword>
<keyword id="KW-0539">Nucleus</keyword>
<keyword id="KW-0597">Phosphoprotein</keyword>
<keyword id="KW-1267">Proteomics identification</keyword>
<keyword id="KW-1185">Reference proteome</keyword>
<keyword id="KW-0677">Repeat</keyword>
<keyword id="KW-0802">TPR repeat</keyword>
<keyword id="KW-0804">Transcription</keyword>
<keyword id="KW-0805">Transcription regulation</keyword>
<keyword id="KW-0879">Wnt signaling pathway</keyword>
<evidence type="ECO:0000250" key="1">
    <source>
        <dbReference type="UniProtKB" id="Q62018"/>
    </source>
</evidence>
<evidence type="ECO:0000256" key="2">
    <source>
        <dbReference type="SAM" id="MobiDB-lite"/>
    </source>
</evidence>
<evidence type="ECO:0000269" key="3">
    <source>
    </source>
</evidence>
<evidence type="ECO:0000269" key="4">
    <source>
    </source>
</evidence>
<evidence type="ECO:0000269" key="5">
    <source>
    </source>
</evidence>
<evidence type="ECO:0000269" key="6">
    <source>
    </source>
</evidence>
<evidence type="ECO:0000269" key="7">
    <source>
    </source>
</evidence>
<evidence type="ECO:0000269" key="8">
    <source>
    </source>
</evidence>
<evidence type="ECO:0000269" key="9">
    <source>
    </source>
</evidence>
<evidence type="ECO:0000269" key="10">
    <source>
    </source>
</evidence>
<evidence type="ECO:0000269" key="11">
    <source>
    </source>
</evidence>
<evidence type="ECO:0000269" key="12">
    <source>
    </source>
</evidence>
<evidence type="ECO:0000305" key="13"/>
<evidence type="ECO:0007744" key="14">
    <source>
    </source>
</evidence>
<evidence type="ECO:0007744" key="15">
    <source>
    </source>
</evidence>
<evidence type="ECO:0007744" key="16">
    <source>
    </source>
</evidence>
<evidence type="ECO:0007744" key="17">
    <source>
    </source>
</evidence>
<evidence type="ECO:0007744" key="18">
    <source>
    </source>
</evidence>
<evidence type="ECO:0007744" key="19">
    <source>
    </source>
</evidence>
<evidence type="ECO:0007744" key="20">
    <source>
    </source>
</evidence>
<evidence type="ECO:0007744" key="21">
    <source>
    </source>
</evidence>
<evidence type="ECO:0007744" key="22">
    <source>
    </source>
</evidence>
<evidence type="ECO:0007744" key="23">
    <source>
    </source>
</evidence>
<evidence type="ECO:0007829" key="24">
    <source>
        <dbReference type="PDB" id="5ZYQ"/>
    </source>
</evidence>
<evidence type="ECO:0007829" key="25">
    <source>
        <dbReference type="PDB" id="6GMH"/>
    </source>
</evidence>
<evidence type="ECO:0007829" key="26">
    <source>
        <dbReference type="PDB" id="6TED"/>
    </source>
</evidence>
<evidence type="ECO:0007829" key="27">
    <source>
        <dbReference type="PDB" id="7OOP"/>
    </source>
</evidence>